<dbReference type="EC" id="4.1.1.39" evidence="1"/>
<dbReference type="EMBL" id="Z70068">
    <property type="protein sequence ID" value="CAA93927.1"/>
    <property type="molecule type" value="Genomic_DNA"/>
</dbReference>
<dbReference type="SMR" id="P92397"/>
<dbReference type="GO" id="GO:0009507">
    <property type="term" value="C:chloroplast"/>
    <property type="evidence" value="ECO:0007669"/>
    <property type="project" value="UniProtKB-SubCell"/>
</dbReference>
<dbReference type="GO" id="GO:0000287">
    <property type="term" value="F:magnesium ion binding"/>
    <property type="evidence" value="ECO:0007669"/>
    <property type="project" value="InterPro"/>
</dbReference>
<dbReference type="GO" id="GO:0004497">
    <property type="term" value="F:monooxygenase activity"/>
    <property type="evidence" value="ECO:0007669"/>
    <property type="project" value="UniProtKB-KW"/>
</dbReference>
<dbReference type="GO" id="GO:0016984">
    <property type="term" value="F:ribulose-bisphosphate carboxylase activity"/>
    <property type="evidence" value="ECO:0007669"/>
    <property type="project" value="UniProtKB-EC"/>
</dbReference>
<dbReference type="GO" id="GO:0009853">
    <property type="term" value="P:photorespiration"/>
    <property type="evidence" value="ECO:0007669"/>
    <property type="project" value="UniProtKB-KW"/>
</dbReference>
<dbReference type="GO" id="GO:0019253">
    <property type="term" value="P:reductive pentose-phosphate cycle"/>
    <property type="evidence" value="ECO:0007669"/>
    <property type="project" value="UniProtKB-KW"/>
</dbReference>
<dbReference type="CDD" id="cd08212">
    <property type="entry name" value="RuBisCO_large_I"/>
    <property type="match status" value="1"/>
</dbReference>
<dbReference type="FunFam" id="3.20.20.110:FF:000001">
    <property type="entry name" value="Ribulose bisphosphate carboxylase large chain"/>
    <property type="match status" value="1"/>
</dbReference>
<dbReference type="FunFam" id="3.30.70.150:FF:000001">
    <property type="entry name" value="Ribulose bisphosphate carboxylase large chain"/>
    <property type="match status" value="1"/>
</dbReference>
<dbReference type="Gene3D" id="3.20.20.110">
    <property type="entry name" value="Ribulose bisphosphate carboxylase, large subunit, C-terminal domain"/>
    <property type="match status" value="1"/>
</dbReference>
<dbReference type="Gene3D" id="3.30.70.150">
    <property type="entry name" value="RuBisCO large subunit, N-terminal domain"/>
    <property type="match status" value="1"/>
</dbReference>
<dbReference type="HAMAP" id="MF_01338">
    <property type="entry name" value="RuBisCO_L_type1"/>
    <property type="match status" value="1"/>
</dbReference>
<dbReference type="InterPro" id="IPR033966">
    <property type="entry name" value="RuBisCO"/>
</dbReference>
<dbReference type="InterPro" id="IPR020878">
    <property type="entry name" value="RuBisCo_large_chain_AS"/>
</dbReference>
<dbReference type="InterPro" id="IPR000685">
    <property type="entry name" value="RuBisCO_lsu_C"/>
</dbReference>
<dbReference type="InterPro" id="IPR036376">
    <property type="entry name" value="RuBisCO_lsu_C_sf"/>
</dbReference>
<dbReference type="InterPro" id="IPR017443">
    <property type="entry name" value="RuBisCO_lsu_fd_N"/>
</dbReference>
<dbReference type="InterPro" id="IPR036422">
    <property type="entry name" value="RuBisCO_lsu_N_sf"/>
</dbReference>
<dbReference type="InterPro" id="IPR020888">
    <property type="entry name" value="RuBisCO_lsuI"/>
</dbReference>
<dbReference type="NCBIfam" id="NF003252">
    <property type="entry name" value="PRK04208.1"/>
    <property type="match status" value="1"/>
</dbReference>
<dbReference type="PANTHER" id="PTHR42704">
    <property type="entry name" value="RIBULOSE BISPHOSPHATE CARBOXYLASE"/>
    <property type="match status" value="1"/>
</dbReference>
<dbReference type="PANTHER" id="PTHR42704:SF16">
    <property type="entry name" value="RIBULOSE BISPHOSPHATE CARBOXYLASE LARGE CHAIN"/>
    <property type="match status" value="1"/>
</dbReference>
<dbReference type="Pfam" id="PF00016">
    <property type="entry name" value="RuBisCO_large"/>
    <property type="match status" value="1"/>
</dbReference>
<dbReference type="Pfam" id="PF02788">
    <property type="entry name" value="RuBisCO_large_N"/>
    <property type="match status" value="1"/>
</dbReference>
<dbReference type="SFLD" id="SFLDG01052">
    <property type="entry name" value="RuBisCO"/>
    <property type="match status" value="1"/>
</dbReference>
<dbReference type="SFLD" id="SFLDS00014">
    <property type="entry name" value="RuBisCO"/>
    <property type="match status" value="1"/>
</dbReference>
<dbReference type="SFLD" id="SFLDG00301">
    <property type="entry name" value="RuBisCO-like_proteins"/>
    <property type="match status" value="1"/>
</dbReference>
<dbReference type="SUPFAM" id="SSF51649">
    <property type="entry name" value="RuBisCo, C-terminal domain"/>
    <property type="match status" value="1"/>
</dbReference>
<dbReference type="SUPFAM" id="SSF54966">
    <property type="entry name" value="RuBisCO, large subunit, small (N-terminal) domain"/>
    <property type="match status" value="1"/>
</dbReference>
<dbReference type="PROSITE" id="PS00157">
    <property type="entry name" value="RUBISCO_LARGE"/>
    <property type="match status" value="1"/>
</dbReference>
<name>RBL_LUPAL</name>
<evidence type="ECO:0000255" key="1">
    <source>
        <dbReference type="HAMAP-Rule" id="MF_01338"/>
    </source>
</evidence>
<reference key="1">
    <citation type="journal article" date="1995" name="Bot. Acta">
        <title>Molecular phylogeny of the Papilionoideae (family Leguminosae): rbcL sequences versus chemical taxonomy.</title>
        <authorList>
            <person name="Kaess E."/>
            <person name="Wink M."/>
        </authorList>
    </citation>
    <scope>NUCLEOTIDE SEQUENCE [GENOMIC DNA]</scope>
    <source>
        <tissue>Leaf</tissue>
    </source>
</reference>
<gene>
    <name evidence="1" type="primary">rbcL</name>
</gene>
<accession>P92397</accession>
<keyword id="KW-0113">Calvin cycle</keyword>
<keyword id="KW-0120">Carbon dioxide fixation</keyword>
<keyword id="KW-0150">Chloroplast</keyword>
<keyword id="KW-1015">Disulfide bond</keyword>
<keyword id="KW-0456">Lyase</keyword>
<keyword id="KW-0460">Magnesium</keyword>
<keyword id="KW-0479">Metal-binding</keyword>
<keyword id="KW-0488">Methylation</keyword>
<keyword id="KW-0503">Monooxygenase</keyword>
<keyword id="KW-0560">Oxidoreductase</keyword>
<keyword id="KW-0601">Photorespiration</keyword>
<keyword id="KW-0602">Photosynthesis</keyword>
<keyword id="KW-0934">Plastid</keyword>
<protein>
    <recommendedName>
        <fullName evidence="1">Ribulose bisphosphate carboxylase large chain</fullName>
        <shortName evidence="1">RuBisCO large subunit</shortName>
        <ecNumber evidence="1">4.1.1.39</ecNumber>
    </recommendedName>
</protein>
<proteinExistence type="inferred from homology"/>
<geneLocation type="chloroplast"/>
<sequence length="455" mass="50315">SVGFKAGVKDYKLTYYTPDYETKDTDILAAFRVTPQPGVPPEEAGAAVAAESSTGTWTTVWTDGLTSLDRYKGRCYHIEPVAGEENQFIAYVAYPLDLFEEGSVTNMFTSIVGNVFGFKALRALRLEDLRIPNAYVKTFQGPPHGIQVERDKLNKYGRPLLGCTIKPKLGLSAKNYGRAVYECLRGGLDFTKDDENVNSQPFMRWRDRFLFCAEALYKAQAETGEIKGHYLNATAGTCEEMIKRAVFARELGVPIVMHDYLTGGFTANTSLAHYCRDNGLLLHIHRAMHAVIDRQKNHGMHFRVLAKALRLSGGDHIHSGTVVGKLEGEREITLGFVDLLRDDFVEKDRSRGIYFTQDWVSLPGVLPVASGGIHVWHMPALTEIFGDDSVLQFGGGTLGHPWGNAPGAVANRVALEACVQARNEGRDLASEGNQIIREASKWSPELAAACEVWKE</sequence>
<feature type="chain" id="PRO_0000062508" description="Ribulose bisphosphate carboxylase large chain">
    <location>
        <begin position="1" status="less than"/>
        <end position="455" status="greater than"/>
    </location>
</feature>
<feature type="active site" description="Proton acceptor" evidence="1">
    <location>
        <position position="166"/>
    </location>
</feature>
<feature type="active site" description="Proton acceptor" evidence="1">
    <location>
        <position position="285"/>
    </location>
</feature>
<feature type="binding site" description="in homodimeric partner" evidence="1">
    <location>
        <position position="114"/>
    </location>
    <ligand>
        <name>substrate</name>
    </ligand>
</feature>
<feature type="binding site" evidence="1">
    <location>
        <position position="164"/>
    </location>
    <ligand>
        <name>substrate</name>
    </ligand>
</feature>
<feature type="binding site" evidence="1">
    <location>
        <position position="168"/>
    </location>
    <ligand>
        <name>substrate</name>
    </ligand>
</feature>
<feature type="binding site" description="via carbamate group" evidence="1">
    <location>
        <position position="192"/>
    </location>
    <ligand>
        <name>Mg(2+)</name>
        <dbReference type="ChEBI" id="CHEBI:18420"/>
    </ligand>
</feature>
<feature type="binding site" evidence="1">
    <location>
        <position position="194"/>
    </location>
    <ligand>
        <name>Mg(2+)</name>
        <dbReference type="ChEBI" id="CHEBI:18420"/>
    </ligand>
</feature>
<feature type="binding site" evidence="1">
    <location>
        <position position="195"/>
    </location>
    <ligand>
        <name>Mg(2+)</name>
        <dbReference type="ChEBI" id="CHEBI:18420"/>
    </ligand>
</feature>
<feature type="binding site" evidence="1">
    <location>
        <position position="286"/>
    </location>
    <ligand>
        <name>substrate</name>
    </ligand>
</feature>
<feature type="binding site" evidence="1">
    <location>
        <position position="318"/>
    </location>
    <ligand>
        <name>substrate</name>
    </ligand>
</feature>
<feature type="binding site" evidence="1">
    <location>
        <position position="370"/>
    </location>
    <ligand>
        <name>substrate</name>
    </ligand>
</feature>
<feature type="site" description="Transition state stabilizer" evidence="1">
    <location>
        <position position="325"/>
    </location>
</feature>
<feature type="modified residue" description="N6,N6,N6-trimethyllysine" evidence="1">
    <location>
        <position position="5"/>
    </location>
</feature>
<feature type="modified residue" description="N6-carboxylysine" evidence="1">
    <location>
        <position position="192"/>
    </location>
</feature>
<feature type="disulfide bond" description="Interchain; in linked form" evidence="1">
    <location>
        <position position="238"/>
    </location>
</feature>
<feature type="non-terminal residue">
    <location>
        <position position="1"/>
    </location>
</feature>
<feature type="non-terminal residue">
    <location>
        <position position="455"/>
    </location>
</feature>
<comment type="function">
    <text evidence="1">RuBisCO catalyzes two reactions: the carboxylation of D-ribulose 1,5-bisphosphate, the primary event in carbon dioxide fixation, as well as the oxidative fragmentation of the pentose substrate in the photorespiration process. Both reactions occur simultaneously and in competition at the same active site.</text>
</comment>
<comment type="catalytic activity">
    <reaction evidence="1">
        <text>2 (2R)-3-phosphoglycerate + 2 H(+) = D-ribulose 1,5-bisphosphate + CO2 + H2O</text>
        <dbReference type="Rhea" id="RHEA:23124"/>
        <dbReference type="ChEBI" id="CHEBI:15377"/>
        <dbReference type="ChEBI" id="CHEBI:15378"/>
        <dbReference type="ChEBI" id="CHEBI:16526"/>
        <dbReference type="ChEBI" id="CHEBI:57870"/>
        <dbReference type="ChEBI" id="CHEBI:58272"/>
        <dbReference type="EC" id="4.1.1.39"/>
    </reaction>
</comment>
<comment type="catalytic activity">
    <reaction evidence="1">
        <text>D-ribulose 1,5-bisphosphate + O2 = 2-phosphoglycolate + (2R)-3-phosphoglycerate + 2 H(+)</text>
        <dbReference type="Rhea" id="RHEA:36631"/>
        <dbReference type="ChEBI" id="CHEBI:15378"/>
        <dbReference type="ChEBI" id="CHEBI:15379"/>
        <dbReference type="ChEBI" id="CHEBI:57870"/>
        <dbReference type="ChEBI" id="CHEBI:58033"/>
        <dbReference type="ChEBI" id="CHEBI:58272"/>
    </reaction>
</comment>
<comment type="cofactor">
    <cofactor evidence="1">
        <name>Mg(2+)</name>
        <dbReference type="ChEBI" id="CHEBI:18420"/>
    </cofactor>
    <text evidence="1">Binds 1 Mg(2+) ion per subunit.</text>
</comment>
<comment type="subunit">
    <text evidence="1">Heterohexadecamer of 8 large chains and 8 small chains; disulfide-linked. The disulfide link is formed within the large subunit homodimers.</text>
</comment>
<comment type="subcellular location">
    <subcellularLocation>
        <location>Plastid</location>
        <location>Chloroplast</location>
    </subcellularLocation>
</comment>
<comment type="PTM">
    <text evidence="1">The disulfide bond which can form in the large chain dimeric partners within the hexadecamer appears to be associated with oxidative stress and protein turnover.</text>
</comment>
<comment type="miscellaneous">
    <text evidence="1">The basic functional RuBisCO is composed of a large chain homodimer in a 'head-to-tail' conformation. In form I RuBisCO this homodimer is arranged in a barrel-like tetramer with the small subunits forming a tetrameric 'cap' on each end of the 'barrel'.</text>
</comment>
<comment type="similarity">
    <text evidence="1">Belongs to the RuBisCO large chain family. Type I subfamily.</text>
</comment>
<organism>
    <name type="scientific">Lupinus albus</name>
    <name type="common">White lupine</name>
    <name type="synonym">Lupinus termis</name>
    <dbReference type="NCBI Taxonomy" id="3870"/>
    <lineage>
        <taxon>Eukaryota</taxon>
        <taxon>Viridiplantae</taxon>
        <taxon>Streptophyta</taxon>
        <taxon>Embryophyta</taxon>
        <taxon>Tracheophyta</taxon>
        <taxon>Spermatophyta</taxon>
        <taxon>Magnoliopsida</taxon>
        <taxon>eudicotyledons</taxon>
        <taxon>Gunneridae</taxon>
        <taxon>Pentapetalae</taxon>
        <taxon>rosids</taxon>
        <taxon>fabids</taxon>
        <taxon>Fabales</taxon>
        <taxon>Fabaceae</taxon>
        <taxon>Papilionoideae</taxon>
        <taxon>50 kb inversion clade</taxon>
        <taxon>genistoids sensu lato</taxon>
        <taxon>core genistoids</taxon>
        <taxon>Genisteae</taxon>
        <taxon>Lupinus</taxon>
    </lineage>
</organism>